<name>KBL_MOUSE</name>
<organism>
    <name type="scientific">Mus musculus</name>
    <name type="common">Mouse</name>
    <dbReference type="NCBI Taxonomy" id="10090"/>
    <lineage>
        <taxon>Eukaryota</taxon>
        <taxon>Metazoa</taxon>
        <taxon>Chordata</taxon>
        <taxon>Craniata</taxon>
        <taxon>Vertebrata</taxon>
        <taxon>Euteleostomi</taxon>
        <taxon>Mammalia</taxon>
        <taxon>Eutheria</taxon>
        <taxon>Euarchontoglires</taxon>
        <taxon>Glires</taxon>
        <taxon>Rodentia</taxon>
        <taxon>Myomorpha</taxon>
        <taxon>Muroidea</taxon>
        <taxon>Muridae</taxon>
        <taxon>Murinae</taxon>
        <taxon>Mus</taxon>
        <taxon>Mus</taxon>
    </lineage>
</organism>
<feature type="transit peptide" description="Mitochondrion" evidence="3">
    <location>
        <begin position="1"/>
        <end position="18"/>
    </location>
</feature>
<feature type="chain" id="PRO_0000001247" description="2-amino-3-ketobutyrate coenzyme A ligase, mitochondrial">
    <location>
        <begin position="19"/>
        <end position="416"/>
    </location>
</feature>
<feature type="binding site" description="in other chain" evidence="2">
    <location>
        <begin position="131"/>
        <end position="132"/>
    </location>
    <ligand>
        <name>pyridoxal 5'-phosphate</name>
        <dbReference type="ChEBI" id="CHEBI:597326"/>
        <note>ligand shared between dimeric partners</note>
    </ligand>
</feature>
<feature type="binding site" evidence="2">
    <location>
        <position position="156"/>
    </location>
    <ligand>
        <name>substrate</name>
    </ligand>
</feature>
<feature type="binding site" description="in other chain" evidence="2">
    <location>
        <position position="203"/>
    </location>
    <ligand>
        <name>pyridoxal 5'-phosphate</name>
        <dbReference type="ChEBI" id="CHEBI:597326"/>
        <note>ligand shared between dimeric partners</note>
    </ligand>
</feature>
<feature type="binding site" description="in other chain" evidence="2">
    <location>
        <begin position="259"/>
        <end position="262"/>
    </location>
    <ligand>
        <name>pyridoxal 5'-phosphate</name>
        <dbReference type="ChEBI" id="CHEBI:597326"/>
        <note>ligand shared between dimeric partners</note>
    </ligand>
</feature>
<feature type="binding site" evidence="2">
    <location>
        <begin position="292"/>
        <end position="293"/>
    </location>
    <ligand>
        <name>pyridoxal 5'-phosphate</name>
        <dbReference type="ChEBI" id="CHEBI:597326"/>
        <note>ligand shared between dimeric partners</note>
    </ligand>
</feature>
<feature type="binding site" evidence="2">
    <location>
        <position position="386"/>
    </location>
    <ligand>
        <name>substrate</name>
    </ligand>
</feature>
<feature type="modified residue" description="N6-acetyllysine; alternate" evidence="6">
    <location>
        <position position="42"/>
    </location>
</feature>
<feature type="modified residue" description="N6-succinyllysine; alternate" evidence="7">
    <location>
        <position position="42"/>
    </location>
</feature>
<feature type="modified residue" description="N6-acetyllysine; alternate" evidence="6">
    <location>
        <position position="184"/>
    </location>
</feature>
<feature type="modified residue" description="N6-succinyllysine; alternate" evidence="7">
    <location>
        <position position="184"/>
    </location>
</feature>
<feature type="modified residue" description="N6-(pyridoxal phosphate)lysine" evidence="3">
    <location>
        <position position="262"/>
    </location>
</feature>
<feature type="modified residue" description="N6-succinyllysine" evidence="7">
    <location>
        <position position="323"/>
    </location>
</feature>
<feature type="modified residue" description="N6-succinyllysine" evidence="7">
    <location>
        <position position="365"/>
    </location>
</feature>
<feature type="modified residue" description="N6-acetyllysine; alternate" evidence="6">
    <location>
        <position position="380"/>
    </location>
</feature>
<feature type="modified residue" description="N6-succinyllysine; alternate" evidence="7">
    <location>
        <position position="380"/>
    </location>
</feature>
<evidence type="ECO:0000250" key="1">
    <source>
        <dbReference type="UniProtKB" id="O75600"/>
    </source>
</evidence>
<evidence type="ECO:0000250" key="2">
    <source>
        <dbReference type="UniProtKB" id="P0AB77"/>
    </source>
</evidence>
<evidence type="ECO:0000250" key="3">
    <source>
        <dbReference type="UniProtKB" id="Q0P5L8"/>
    </source>
</evidence>
<evidence type="ECO:0000269" key="4">
    <source>
    </source>
</evidence>
<evidence type="ECO:0000305" key="5"/>
<evidence type="ECO:0007744" key="6">
    <source>
    </source>
</evidence>
<evidence type="ECO:0007744" key="7">
    <source>
    </source>
</evidence>
<protein>
    <recommendedName>
        <fullName>2-amino-3-ketobutyrate coenzyme A ligase, mitochondrial</fullName>
        <shortName>AKB ligase</shortName>
        <ecNumber evidence="3">2.3.1.29</ecNumber>
    </recommendedName>
    <alternativeName>
        <fullName>Aminoacetone synthase</fullName>
    </alternativeName>
    <alternativeName>
        <fullName>Glycine acetyltransferase</fullName>
    </alternativeName>
</protein>
<gene>
    <name type="primary">Gcat</name>
    <name type="synonym">Kbl</name>
</gene>
<accession>O88986</accession>
<comment type="function">
    <text evidence="3">Pyridoxal phosphate (PLP) dependent enzyme, which catalyzes the cleavage of 2-amino-3-oxobutanoate to glycine and acetyl-CoA. Catalyzes the second reaction step on the main metabolic degradation pathway for L-threonine.</text>
</comment>
<comment type="catalytic activity">
    <reaction evidence="3">
        <text>glycine + acetyl-CoA = (2S)-2-amino-3-oxobutanoate + CoA</text>
        <dbReference type="Rhea" id="RHEA:20736"/>
        <dbReference type="ChEBI" id="CHEBI:57287"/>
        <dbReference type="ChEBI" id="CHEBI:57288"/>
        <dbReference type="ChEBI" id="CHEBI:57305"/>
        <dbReference type="ChEBI" id="CHEBI:78948"/>
        <dbReference type="EC" id="2.3.1.29"/>
    </reaction>
    <physiologicalReaction direction="right-to-left" evidence="3">
        <dbReference type="Rhea" id="RHEA:20738"/>
    </physiologicalReaction>
</comment>
<comment type="cofactor">
    <cofactor evidence="3">
        <name>pyridoxal 5'-phosphate</name>
        <dbReference type="ChEBI" id="CHEBI:597326"/>
    </cofactor>
</comment>
<comment type="pathway">
    <text>Amino-acid degradation; L-threonine degradation via oxydo-reductase pathway; glycine from L-threonine: step 2/2.</text>
</comment>
<comment type="subcellular location">
    <subcellularLocation>
        <location evidence="3">Mitochondrion</location>
    </subcellularLocation>
    <subcellularLocation>
        <location evidence="1">Nucleus</location>
    </subcellularLocation>
    <text evidence="1">Translocates to the nucleus upon cold and osmotic stress.</text>
</comment>
<comment type="developmental stage">
    <text evidence="4">Present in the placenta, brain and liver during embryonic development (at protein level).</text>
</comment>
<comment type="disruption phenotype">
    <text evidence="4">No visible phenotype.</text>
</comment>
<comment type="similarity">
    <text evidence="5">Belongs to the class-II pyridoxal-phosphate-dependent aminotransferase family.</text>
</comment>
<keyword id="KW-0007">Acetylation</keyword>
<keyword id="KW-0012">Acyltransferase</keyword>
<keyword id="KW-0496">Mitochondrion</keyword>
<keyword id="KW-0539">Nucleus</keyword>
<keyword id="KW-0663">Pyridoxal phosphate</keyword>
<keyword id="KW-1185">Reference proteome</keyword>
<keyword id="KW-0808">Transferase</keyword>
<keyword id="KW-0809">Transit peptide</keyword>
<sequence length="416" mass="44931">MWASFMWHGALSPGRRAHSALAQLRCILDSELEGIRGAGTWKSERVITSRQGPSIRVDGISGGILNFCANNYLGLSSHPAVIQAGLQTLEEFGAGLSSTRFICGTQSIHKNLEAKIAHFHQREDAILYPSCFDANAGLFEALLTPEDAVLSDELNHASIIDGIRLCKAHKYRYRHLDMADLEAKLKEAQKHRLRLVATDGAFSMDGDIAPLQDICRLAAQYGALVFVDECHATGFLGPTGRGTDELLGVMDQVTIINSTLGKALGGASGGYTTGPEPLVSLLRQRSRPYLFSNSLPPAVVGCASKALDLLMESNAIIQSMAAKTRRFRSKMEAAGFTVSGADHPICPVMLGDARLSSQMADDMLKKGIFVIGFSYPVVPKGKARIRVQISAVHSEEDIDRCVEAFVEVGRLHGALP</sequence>
<proteinExistence type="evidence at protein level"/>
<reference key="1">
    <citation type="journal article" date="2000" name="Eur. J. Biochem.">
        <title>Molecular cloning of the human and murine 2-amino-3-ketobutyrate coenzyme A ligase cDNAs.</title>
        <authorList>
            <person name="Edgar A.J."/>
            <person name="Polak J.M."/>
        </authorList>
    </citation>
    <scope>NUCLEOTIDE SEQUENCE [MRNA]</scope>
    <source>
        <tissue>Lung</tissue>
    </source>
</reference>
<reference key="2">
    <citation type="journal article" date="2005" name="Science">
        <title>The transcriptional landscape of the mammalian genome.</title>
        <authorList>
            <person name="Carninci P."/>
            <person name="Kasukawa T."/>
            <person name="Katayama S."/>
            <person name="Gough J."/>
            <person name="Frith M.C."/>
            <person name="Maeda N."/>
            <person name="Oyama R."/>
            <person name="Ravasi T."/>
            <person name="Lenhard B."/>
            <person name="Wells C."/>
            <person name="Kodzius R."/>
            <person name="Shimokawa K."/>
            <person name="Bajic V.B."/>
            <person name="Brenner S.E."/>
            <person name="Batalov S."/>
            <person name="Forrest A.R."/>
            <person name="Zavolan M."/>
            <person name="Davis M.J."/>
            <person name="Wilming L.G."/>
            <person name="Aidinis V."/>
            <person name="Allen J.E."/>
            <person name="Ambesi-Impiombato A."/>
            <person name="Apweiler R."/>
            <person name="Aturaliya R.N."/>
            <person name="Bailey T.L."/>
            <person name="Bansal M."/>
            <person name="Baxter L."/>
            <person name="Beisel K.W."/>
            <person name="Bersano T."/>
            <person name="Bono H."/>
            <person name="Chalk A.M."/>
            <person name="Chiu K.P."/>
            <person name="Choudhary V."/>
            <person name="Christoffels A."/>
            <person name="Clutterbuck D.R."/>
            <person name="Crowe M.L."/>
            <person name="Dalla E."/>
            <person name="Dalrymple B.P."/>
            <person name="de Bono B."/>
            <person name="Della Gatta G."/>
            <person name="di Bernardo D."/>
            <person name="Down T."/>
            <person name="Engstrom P."/>
            <person name="Fagiolini M."/>
            <person name="Faulkner G."/>
            <person name="Fletcher C.F."/>
            <person name="Fukushima T."/>
            <person name="Furuno M."/>
            <person name="Futaki S."/>
            <person name="Gariboldi M."/>
            <person name="Georgii-Hemming P."/>
            <person name="Gingeras T.R."/>
            <person name="Gojobori T."/>
            <person name="Green R.E."/>
            <person name="Gustincich S."/>
            <person name="Harbers M."/>
            <person name="Hayashi Y."/>
            <person name="Hensch T.K."/>
            <person name="Hirokawa N."/>
            <person name="Hill D."/>
            <person name="Huminiecki L."/>
            <person name="Iacono M."/>
            <person name="Ikeo K."/>
            <person name="Iwama A."/>
            <person name="Ishikawa T."/>
            <person name="Jakt M."/>
            <person name="Kanapin A."/>
            <person name="Katoh M."/>
            <person name="Kawasawa Y."/>
            <person name="Kelso J."/>
            <person name="Kitamura H."/>
            <person name="Kitano H."/>
            <person name="Kollias G."/>
            <person name="Krishnan S.P."/>
            <person name="Kruger A."/>
            <person name="Kummerfeld S.K."/>
            <person name="Kurochkin I.V."/>
            <person name="Lareau L.F."/>
            <person name="Lazarevic D."/>
            <person name="Lipovich L."/>
            <person name="Liu J."/>
            <person name="Liuni S."/>
            <person name="McWilliam S."/>
            <person name="Madan Babu M."/>
            <person name="Madera M."/>
            <person name="Marchionni L."/>
            <person name="Matsuda H."/>
            <person name="Matsuzawa S."/>
            <person name="Miki H."/>
            <person name="Mignone F."/>
            <person name="Miyake S."/>
            <person name="Morris K."/>
            <person name="Mottagui-Tabar S."/>
            <person name="Mulder N."/>
            <person name="Nakano N."/>
            <person name="Nakauchi H."/>
            <person name="Ng P."/>
            <person name="Nilsson R."/>
            <person name="Nishiguchi S."/>
            <person name="Nishikawa S."/>
            <person name="Nori F."/>
            <person name="Ohara O."/>
            <person name="Okazaki Y."/>
            <person name="Orlando V."/>
            <person name="Pang K.C."/>
            <person name="Pavan W.J."/>
            <person name="Pavesi G."/>
            <person name="Pesole G."/>
            <person name="Petrovsky N."/>
            <person name="Piazza S."/>
            <person name="Reed J."/>
            <person name="Reid J.F."/>
            <person name="Ring B.Z."/>
            <person name="Ringwald M."/>
            <person name="Rost B."/>
            <person name="Ruan Y."/>
            <person name="Salzberg S.L."/>
            <person name="Sandelin A."/>
            <person name="Schneider C."/>
            <person name="Schoenbach C."/>
            <person name="Sekiguchi K."/>
            <person name="Semple C.A."/>
            <person name="Seno S."/>
            <person name="Sessa L."/>
            <person name="Sheng Y."/>
            <person name="Shibata Y."/>
            <person name="Shimada H."/>
            <person name="Shimada K."/>
            <person name="Silva D."/>
            <person name="Sinclair B."/>
            <person name="Sperling S."/>
            <person name="Stupka E."/>
            <person name="Sugiura K."/>
            <person name="Sultana R."/>
            <person name="Takenaka Y."/>
            <person name="Taki K."/>
            <person name="Tammoja K."/>
            <person name="Tan S.L."/>
            <person name="Tang S."/>
            <person name="Taylor M.S."/>
            <person name="Tegner J."/>
            <person name="Teichmann S.A."/>
            <person name="Ueda H.R."/>
            <person name="van Nimwegen E."/>
            <person name="Verardo R."/>
            <person name="Wei C.L."/>
            <person name="Yagi K."/>
            <person name="Yamanishi H."/>
            <person name="Zabarovsky E."/>
            <person name="Zhu S."/>
            <person name="Zimmer A."/>
            <person name="Hide W."/>
            <person name="Bult C."/>
            <person name="Grimmond S.M."/>
            <person name="Teasdale R.D."/>
            <person name="Liu E.T."/>
            <person name="Brusic V."/>
            <person name="Quackenbush J."/>
            <person name="Wahlestedt C."/>
            <person name="Mattick J.S."/>
            <person name="Hume D.A."/>
            <person name="Kai C."/>
            <person name="Sasaki D."/>
            <person name="Tomaru Y."/>
            <person name="Fukuda S."/>
            <person name="Kanamori-Katayama M."/>
            <person name="Suzuki M."/>
            <person name="Aoki J."/>
            <person name="Arakawa T."/>
            <person name="Iida J."/>
            <person name="Imamura K."/>
            <person name="Itoh M."/>
            <person name="Kato T."/>
            <person name="Kawaji H."/>
            <person name="Kawagashira N."/>
            <person name="Kawashima T."/>
            <person name="Kojima M."/>
            <person name="Kondo S."/>
            <person name="Konno H."/>
            <person name="Nakano K."/>
            <person name="Ninomiya N."/>
            <person name="Nishio T."/>
            <person name="Okada M."/>
            <person name="Plessy C."/>
            <person name="Shibata K."/>
            <person name="Shiraki T."/>
            <person name="Suzuki S."/>
            <person name="Tagami M."/>
            <person name="Waki K."/>
            <person name="Watahiki A."/>
            <person name="Okamura-Oho Y."/>
            <person name="Suzuki H."/>
            <person name="Kawai J."/>
            <person name="Hayashizaki Y."/>
        </authorList>
    </citation>
    <scope>NUCLEOTIDE SEQUENCE [LARGE SCALE MRNA]</scope>
    <source>
        <strain>C57BL/6J</strain>
        <tissue>Eye</tissue>
    </source>
</reference>
<reference key="3">
    <citation type="journal article" date="2004" name="Genome Res.">
        <title>The status, quality, and expansion of the NIH full-length cDNA project: the Mammalian Gene Collection (MGC).</title>
        <authorList>
            <consortium name="The MGC Project Team"/>
        </authorList>
    </citation>
    <scope>NUCLEOTIDE SEQUENCE [LARGE SCALE MRNA]</scope>
    <source>
        <strain>FVB/N</strain>
        <tissue>Liver</tissue>
    </source>
</reference>
<reference key="4">
    <citation type="journal article" date="2010" name="Cell">
        <title>A tissue-specific atlas of mouse protein phosphorylation and expression.</title>
        <authorList>
            <person name="Huttlin E.L."/>
            <person name="Jedrychowski M.P."/>
            <person name="Elias J.E."/>
            <person name="Goswami T."/>
            <person name="Rad R."/>
            <person name="Beausoleil S.A."/>
            <person name="Villen J."/>
            <person name="Haas W."/>
            <person name="Sowa M.E."/>
            <person name="Gygi S.P."/>
        </authorList>
    </citation>
    <scope>IDENTIFICATION BY MASS SPECTROMETRY [LARGE SCALE ANALYSIS]</scope>
    <source>
        <tissue>Brain</tissue>
        <tissue>Kidney</tissue>
        <tissue>Liver</tissue>
        <tissue>Pancreas</tissue>
        <tissue>Spleen</tissue>
        <tissue>Testis</tissue>
    </source>
</reference>
<reference key="5">
    <citation type="journal article" date="2013" name="Mol. Cell">
        <title>SIRT5-mediated lysine desuccinylation impacts diverse metabolic pathways.</title>
        <authorList>
            <person name="Park J."/>
            <person name="Chen Y."/>
            <person name="Tishkoff D.X."/>
            <person name="Peng C."/>
            <person name="Tan M."/>
            <person name="Dai L."/>
            <person name="Xie Z."/>
            <person name="Zhang Y."/>
            <person name="Zwaans B.M."/>
            <person name="Skinner M.E."/>
            <person name="Lombard D.B."/>
            <person name="Zhao Y."/>
        </authorList>
    </citation>
    <scope>SUCCINYLATION [LARGE SCALE ANALYSIS] AT LYS-42; LYS-184; LYS-323; LYS-365 AND LYS-380</scope>
    <scope>IDENTIFICATION BY MASS SPECTROMETRY [LARGE SCALE ANALYSIS]</scope>
    <source>
        <tissue>Liver</tissue>
    </source>
</reference>
<reference key="6">
    <citation type="journal article" date="2013" name="Proc. Natl. Acad. Sci. U.S.A.">
        <title>Label-free quantitative proteomics of the lysine acetylome in mitochondria identifies substrates of SIRT3 in metabolic pathways.</title>
        <authorList>
            <person name="Rardin M.J."/>
            <person name="Newman J.C."/>
            <person name="Held J.M."/>
            <person name="Cusack M.P."/>
            <person name="Sorensen D.J."/>
            <person name="Li B."/>
            <person name="Schilling B."/>
            <person name="Mooney S.D."/>
            <person name="Kahn C.R."/>
            <person name="Verdin E."/>
            <person name="Gibson B.W."/>
        </authorList>
    </citation>
    <scope>ACETYLATION [LARGE SCALE ANALYSIS] AT LYS-42; LYS-184 AND LYS-380</scope>
    <scope>IDENTIFICATION BY MASS SPECTROMETRY [LARGE SCALE ANALYSIS]</scope>
    <source>
        <tissue>Liver</tissue>
    </source>
</reference>
<reference key="7">
    <citation type="journal article" date="2018" name="Sci. Rep.">
        <title>Mice deficient in the Shmt2 gene have mitochondrial respiration defects and are embryonic lethal.</title>
        <authorList>
            <person name="Tani H."/>
            <person name="Ohnishi S."/>
            <person name="Shitara H."/>
            <person name="Mito T."/>
            <person name="Yamaguchi M."/>
            <person name="Yonekawa H."/>
            <person name="Hashizume O."/>
            <person name="Ishikawa K."/>
            <person name="Nakada K."/>
            <person name="Hayashi J.I."/>
        </authorList>
    </citation>
    <scope>DISRUPTION PHENOTYPE</scope>
    <scope>DEVELOPMENTAL STAGE</scope>
</reference>
<dbReference type="EC" id="2.3.1.29" evidence="3"/>
<dbReference type="EMBL" id="AF093403">
    <property type="protein sequence ID" value="AAC99774.1"/>
    <property type="molecule type" value="mRNA"/>
</dbReference>
<dbReference type="EMBL" id="AK087433">
    <property type="protein sequence ID" value="BAC39872.1"/>
    <property type="molecule type" value="mRNA"/>
</dbReference>
<dbReference type="EMBL" id="BC024107">
    <property type="protein sequence ID" value="AAH24107.1"/>
    <property type="molecule type" value="mRNA"/>
</dbReference>
<dbReference type="CCDS" id="CCDS27630.1"/>
<dbReference type="RefSeq" id="NP_038875.3">
    <property type="nucleotide sequence ID" value="NM_013847.4"/>
</dbReference>
<dbReference type="SMR" id="O88986"/>
<dbReference type="BioGRID" id="205059">
    <property type="interactions" value="5"/>
</dbReference>
<dbReference type="FunCoup" id="O88986">
    <property type="interactions" value="557"/>
</dbReference>
<dbReference type="STRING" id="10090.ENSMUSP00000006544"/>
<dbReference type="GlyGen" id="O88986">
    <property type="glycosylation" value="1 site, 1 O-linked glycan (1 site)"/>
</dbReference>
<dbReference type="iPTMnet" id="O88986"/>
<dbReference type="PhosphoSitePlus" id="O88986"/>
<dbReference type="SwissPalm" id="O88986"/>
<dbReference type="REPRODUCTION-2DPAGE" id="O88986"/>
<dbReference type="jPOST" id="O88986"/>
<dbReference type="PaxDb" id="10090-ENSMUSP00000006544"/>
<dbReference type="PeptideAtlas" id="O88986"/>
<dbReference type="ProteomicsDB" id="263575"/>
<dbReference type="Pumba" id="O88986"/>
<dbReference type="DNASU" id="26912"/>
<dbReference type="Ensembl" id="ENSMUST00000006544.9">
    <property type="protein sequence ID" value="ENSMUSP00000006544.8"/>
    <property type="gene ID" value="ENSMUSG00000006378.16"/>
</dbReference>
<dbReference type="GeneID" id="26912"/>
<dbReference type="KEGG" id="mmu:26912"/>
<dbReference type="UCSC" id="uc007wse.2">
    <property type="organism name" value="mouse"/>
</dbReference>
<dbReference type="AGR" id="MGI:1349389"/>
<dbReference type="CTD" id="23464"/>
<dbReference type="MGI" id="MGI:1349389">
    <property type="gene designation" value="Gcat"/>
</dbReference>
<dbReference type="VEuPathDB" id="HostDB:ENSMUSG00000006378"/>
<dbReference type="eggNOG" id="KOG1359">
    <property type="taxonomic scope" value="Eukaryota"/>
</dbReference>
<dbReference type="GeneTree" id="ENSGT00940000155729"/>
<dbReference type="HOGENOM" id="CLU_015846_11_0_1"/>
<dbReference type="InParanoid" id="O88986"/>
<dbReference type="OMA" id="GTHEYCD"/>
<dbReference type="OrthoDB" id="10263824at2759"/>
<dbReference type="PhylomeDB" id="O88986"/>
<dbReference type="TreeFam" id="TF105923"/>
<dbReference type="UniPathway" id="UPA00046">
    <property type="reaction ID" value="UER00506"/>
</dbReference>
<dbReference type="BioGRID-ORCS" id="26912">
    <property type="hits" value="6 hits in 78 CRISPR screens"/>
</dbReference>
<dbReference type="ChiTaRS" id="Gcat">
    <property type="organism name" value="mouse"/>
</dbReference>
<dbReference type="PRO" id="PR:O88986"/>
<dbReference type="Proteomes" id="UP000000589">
    <property type="component" value="Chromosome 15"/>
</dbReference>
<dbReference type="RNAct" id="O88986">
    <property type="molecule type" value="protein"/>
</dbReference>
<dbReference type="Bgee" id="ENSMUSG00000006378">
    <property type="expression patterns" value="Expressed in mammary bud and 238 other cell types or tissues"/>
</dbReference>
<dbReference type="ExpressionAtlas" id="O88986">
    <property type="expression patterns" value="baseline and differential"/>
</dbReference>
<dbReference type="GO" id="GO:0005743">
    <property type="term" value="C:mitochondrial inner membrane"/>
    <property type="evidence" value="ECO:0007005"/>
    <property type="project" value="MGI"/>
</dbReference>
<dbReference type="GO" id="GO:0005739">
    <property type="term" value="C:mitochondrion"/>
    <property type="evidence" value="ECO:0007005"/>
    <property type="project" value="MGI"/>
</dbReference>
<dbReference type="GO" id="GO:0016607">
    <property type="term" value="C:nuclear speck"/>
    <property type="evidence" value="ECO:0007669"/>
    <property type="project" value="Ensembl"/>
</dbReference>
<dbReference type="GO" id="GO:0008890">
    <property type="term" value="F:glycine C-acetyltransferase activity"/>
    <property type="evidence" value="ECO:0007669"/>
    <property type="project" value="UniProtKB-EC"/>
</dbReference>
<dbReference type="GO" id="GO:0030170">
    <property type="term" value="F:pyridoxal phosphate binding"/>
    <property type="evidence" value="ECO:0007669"/>
    <property type="project" value="InterPro"/>
</dbReference>
<dbReference type="GO" id="GO:0009058">
    <property type="term" value="P:biosynthetic process"/>
    <property type="evidence" value="ECO:0007669"/>
    <property type="project" value="InterPro"/>
</dbReference>
<dbReference type="GO" id="GO:0019518">
    <property type="term" value="P:L-threonine catabolic process to glycine"/>
    <property type="evidence" value="ECO:0007669"/>
    <property type="project" value="UniProtKB-UniPathway"/>
</dbReference>
<dbReference type="CDD" id="cd06454">
    <property type="entry name" value="KBL_like"/>
    <property type="match status" value="1"/>
</dbReference>
<dbReference type="FunFam" id="3.90.1150.10:FF:000004">
    <property type="entry name" value="2-amino-3-ketobutyrate coenzyme A ligase"/>
    <property type="match status" value="1"/>
</dbReference>
<dbReference type="FunFam" id="3.40.640.10:FF:000006">
    <property type="entry name" value="5-aminolevulinate synthase, mitochondrial"/>
    <property type="match status" value="1"/>
</dbReference>
<dbReference type="Gene3D" id="3.90.1150.10">
    <property type="entry name" value="Aspartate Aminotransferase, domain 1"/>
    <property type="match status" value="1"/>
</dbReference>
<dbReference type="Gene3D" id="3.40.640.10">
    <property type="entry name" value="Type I PLP-dependent aspartate aminotransferase-like (Major domain)"/>
    <property type="match status" value="1"/>
</dbReference>
<dbReference type="HAMAP" id="MF_00985">
    <property type="entry name" value="2am3keto_CoA_ligase"/>
    <property type="match status" value="1"/>
</dbReference>
<dbReference type="InterPro" id="IPR011282">
    <property type="entry name" value="2am3keto_CoA_ligase"/>
</dbReference>
<dbReference type="InterPro" id="IPR001917">
    <property type="entry name" value="Aminotrans_II_pyridoxalP_BS"/>
</dbReference>
<dbReference type="InterPro" id="IPR004839">
    <property type="entry name" value="Aminotransferase_I/II_large"/>
</dbReference>
<dbReference type="InterPro" id="IPR050087">
    <property type="entry name" value="AON_synthase_class-II"/>
</dbReference>
<dbReference type="InterPro" id="IPR015424">
    <property type="entry name" value="PyrdxlP-dep_Trfase"/>
</dbReference>
<dbReference type="InterPro" id="IPR015421">
    <property type="entry name" value="PyrdxlP-dep_Trfase_major"/>
</dbReference>
<dbReference type="InterPro" id="IPR015422">
    <property type="entry name" value="PyrdxlP-dep_Trfase_small"/>
</dbReference>
<dbReference type="NCBIfam" id="TIGR01822">
    <property type="entry name" value="2am3keto_CoA"/>
    <property type="match status" value="1"/>
</dbReference>
<dbReference type="NCBIfam" id="NF005394">
    <property type="entry name" value="PRK06939.1"/>
    <property type="match status" value="1"/>
</dbReference>
<dbReference type="PANTHER" id="PTHR13693:SF102">
    <property type="entry name" value="2-AMINO-3-KETOBUTYRATE COENZYME A LIGASE, MITOCHONDRIAL"/>
    <property type="match status" value="1"/>
</dbReference>
<dbReference type="PANTHER" id="PTHR13693">
    <property type="entry name" value="CLASS II AMINOTRANSFERASE/8-AMINO-7-OXONONANOATE SYNTHASE"/>
    <property type="match status" value="1"/>
</dbReference>
<dbReference type="Pfam" id="PF00155">
    <property type="entry name" value="Aminotran_1_2"/>
    <property type="match status" value="1"/>
</dbReference>
<dbReference type="SUPFAM" id="SSF53383">
    <property type="entry name" value="PLP-dependent transferases"/>
    <property type="match status" value="1"/>
</dbReference>
<dbReference type="PROSITE" id="PS00599">
    <property type="entry name" value="AA_TRANSFER_CLASS_2"/>
    <property type="match status" value="1"/>
</dbReference>